<accession>Q9ZH21</accession>
<comment type="function">
    <text evidence="1">Cell wall formation. Adds enolpyruvyl to UDP-N-acetylglucosamine (By similarity).</text>
</comment>
<comment type="catalytic activity">
    <reaction>
        <text>phosphoenolpyruvate + UDP-N-acetyl-alpha-D-glucosamine = UDP-N-acetyl-3-O-(1-carboxyvinyl)-alpha-D-glucosamine + phosphate</text>
        <dbReference type="Rhea" id="RHEA:18681"/>
        <dbReference type="ChEBI" id="CHEBI:43474"/>
        <dbReference type="ChEBI" id="CHEBI:57705"/>
        <dbReference type="ChEBI" id="CHEBI:58702"/>
        <dbReference type="ChEBI" id="CHEBI:68483"/>
        <dbReference type="EC" id="2.5.1.7"/>
    </reaction>
</comment>
<comment type="pathway">
    <text>Cell wall biogenesis; peptidoglycan biosynthesis.</text>
</comment>
<comment type="subcellular location">
    <subcellularLocation>
        <location evidence="1">Cytoplasm</location>
    </subcellularLocation>
</comment>
<comment type="similarity">
    <text evidence="3">Belongs to the EPSP synthase family. MurA subfamily.</text>
</comment>
<sequence>DLANFLNCLGARVRGAGTDVIKIEGVDSLGGCLRYAVIPDRIEAGTFMVAAAATRGDVVLENVIPRHLEPLIAKLREAGVEVGEEEDRVRVRASGPLSPIDIKTMPYPGFPTDMQSQMMALLSTVPGTSVIVENIFENRFKVADELKRMGARIKVEGRLAVVEGVERLQGACVRATDLRAGAALVVAGLMAEGETRIDNVQYIDRGYFNLEQKLRMLGARIWRAPYDEKTPAQDNAVRKSALI</sequence>
<keyword id="KW-0131">Cell cycle</keyword>
<keyword id="KW-0132">Cell division</keyword>
<keyword id="KW-0133">Cell shape</keyword>
<keyword id="KW-0961">Cell wall biogenesis/degradation</keyword>
<keyword id="KW-0963">Cytoplasm</keyword>
<keyword id="KW-0573">Peptidoglycan synthesis</keyword>
<keyword id="KW-0808">Transferase</keyword>
<protein>
    <recommendedName>
        <fullName>UDP-N-acetylglucosamine 1-carboxyvinyltransferase</fullName>
        <ecNumber>2.5.1.7</ecNumber>
    </recommendedName>
    <alternativeName>
        <fullName>Enoylpyruvate transferase</fullName>
    </alternativeName>
    <alternativeName>
        <fullName>UDP-N-acetylglucosamine enolpyruvyl transferase</fullName>
    </alternativeName>
</protein>
<name>MURA_DESTE</name>
<evidence type="ECO:0000250" key="1"/>
<evidence type="ECO:0000250" key="2">
    <source>
        <dbReference type="UniProtKB" id="P0A749"/>
    </source>
</evidence>
<evidence type="ECO:0000305" key="3"/>
<reference key="1">
    <citation type="journal article" date="1999" name="Extremophiles">
        <title>Dissimilatory sulfite reductase from Archaeoglobus profundus and Desulfotomaculum thermocisternum: phylogenetic and structural implications from gene sequences.</title>
        <authorList>
            <person name="Larsen O."/>
            <person name="Lien T."/>
            <person name="Birkeland N.-K."/>
        </authorList>
    </citation>
    <scope>NUCLEOTIDE SEQUENCE [GENOMIC DNA]</scope>
    <source>
        <strain>DSM 10259 / NBRC 112757 / ST90</strain>
    </source>
</reference>
<gene>
    <name type="primary">murA</name>
</gene>
<dbReference type="EC" id="2.5.1.7"/>
<dbReference type="EMBL" id="AF074396">
    <property type="protein sequence ID" value="AAC96104.1"/>
    <property type="molecule type" value="Genomic_DNA"/>
</dbReference>
<dbReference type="SMR" id="Q9ZH21"/>
<dbReference type="UniPathway" id="UPA00219"/>
<dbReference type="GO" id="GO:0005737">
    <property type="term" value="C:cytoplasm"/>
    <property type="evidence" value="ECO:0007669"/>
    <property type="project" value="UniProtKB-SubCell"/>
</dbReference>
<dbReference type="GO" id="GO:0008760">
    <property type="term" value="F:UDP-N-acetylglucosamine 1-carboxyvinyltransferase activity"/>
    <property type="evidence" value="ECO:0007669"/>
    <property type="project" value="UniProtKB-EC"/>
</dbReference>
<dbReference type="GO" id="GO:0051301">
    <property type="term" value="P:cell division"/>
    <property type="evidence" value="ECO:0007669"/>
    <property type="project" value="UniProtKB-KW"/>
</dbReference>
<dbReference type="GO" id="GO:0071555">
    <property type="term" value="P:cell wall organization"/>
    <property type="evidence" value="ECO:0007669"/>
    <property type="project" value="UniProtKB-KW"/>
</dbReference>
<dbReference type="GO" id="GO:0009252">
    <property type="term" value="P:peptidoglycan biosynthetic process"/>
    <property type="evidence" value="ECO:0007669"/>
    <property type="project" value="UniProtKB-UniPathway"/>
</dbReference>
<dbReference type="GO" id="GO:0008360">
    <property type="term" value="P:regulation of cell shape"/>
    <property type="evidence" value="ECO:0007669"/>
    <property type="project" value="UniProtKB-KW"/>
</dbReference>
<dbReference type="Gene3D" id="3.65.10.10">
    <property type="entry name" value="Enolpyruvate transferase domain"/>
    <property type="match status" value="2"/>
</dbReference>
<dbReference type="InterPro" id="IPR001986">
    <property type="entry name" value="Enolpyruvate_Tfrase_dom"/>
</dbReference>
<dbReference type="InterPro" id="IPR036968">
    <property type="entry name" value="Enolpyruvate_Tfrase_sf"/>
</dbReference>
<dbReference type="InterPro" id="IPR050068">
    <property type="entry name" value="MurA_subfamily"/>
</dbReference>
<dbReference type="InterPro" id="IPR013792">
    <property type="entry name" value="RNA3'P_cycl/enolpyr_Trfase_a/b"/>
</dbReference>
<dbReference type="NCBIfam" id="NF006873">
    <property type="entry name" value="PRK09369.1"/>
    <property type="match status" value="1"/>
</dbReference>
<dbReference type="PANTHER" id="PTHR43783">
    <property type="entry name" value="UDP-N-ACETYLGLUCOSAMINE 1-CARBOXYVINYLTRANSFERASE"/>
    <property type="match status" value="1"/>
</dbReference>
<dbReference type="PANTHER" id="PTHR43783:SF1">
    <property type="entry name" value="UDP-N-ACETYLGLUCOSAMINE 1-CARBOXYVINYLTRANSFERASE"/>
    <property type="match status" value="1"/>
</dbReference>
<dbReference type="Pfam" id="PF00275">
    <property type="entry name" value="EPSP_synthase"/>
    <property type="match status" value="1"/>
</dbReference>
<dbReference type="SUPFAM" id="SSF55205">
    <property type="entry name" value="EPT/RTPC-like"/>
    <property type="match status" value="1"/>
</dbReference>
<organism>
    <name type="scientific">Desulfofundulus thermocisternus</name>
    <name type="common">Desulfotomaculum thermocisternum</name>
    <dbReference type="NCBI Taxonomy" id="42471"/>
    <lineage>
        <taxon>Bacteria</taxon>
        <taxon>Bacillati</taxon>
        <taxon>Bacillota</taxon>
        <taxon>Clostridia</taxon>
        <taxon>Eubacteriales</taxon>
        <taxon>Peptococcaceae</taxon>
        <taxon>Desulfofundulus</taxon>
    </lineage>
</organism>
<feature type="chain" id="PRO_0000178869" description="UDP-N-acetylglucosamine 1-carboxyvinyltransferase">
    <location>
        <begin position="1" status="less than"/>
        <end position="243"/>
    </location>
</feature>
<feature type="binding site" evidence="2">
    <location>
        <position position="113"/>
    </location>
    <ligand>
        <name>UDP-N-acetyl-alpha-D-glucosamine</name>
        <dbReference type="ChEBI" id="CHEBI:57705"/>
    </ligand>
</feature>
<feature type="binding site" evidence="2">
    <location>
        <position position="135"/>
    </location>
    <ligand>
        <name>UDP-N-acetyl-alpha-D-glucosamine</name>
        <dbReference type="ChEBI" id="CHEBI:57705"/>
    </ligand>
</feature>
<feature type="non-terminal residue">
    <location>
        <position position="1"/>
    </location>
</feature>
<proteinExistence type="inferred from homology"/>